<organism evidence="7">
    <name type="scientific">Plasmodium falciparum (isolate 3D7)</name>
    <dbReference type="NCBI Taxonomy" id="36329"/>
    <lineage>
        <taxon>Eukaryota</taxon>
        <taxon>Sar</taxon>
        <taxon>Alveolata</taxon>
        <taxon>Apicomplexa</taxon>
        <taxon>Aconoidasida</taxon>
        <taxon>Haemosporida</taxon>
        <taxon>Plasmodiidae</taxon>
        <taxon>Plasmodium</taxon>
        <taxon>Plasmodium (Laverania)</taxon>
    </lineage>
</organism>
<evidence type="ECO:0000250" key="1">
    <source>
        <dbReference type="UniProtKB" id="P25745"/>
    </source>
</evidence>
<evidence type="ECO:0000255" key="2"/>
<evidence type="ECO:0000269" key="3">
    <source>
    </source>
</evidence>
<evidence type="ECO:0000303" key="4">
    <source>
    </source>
</evidence>
<evidence type="ECO:0000305" key="5"/>
<evidence type="ECO:0000312" key="6">
    <source>
        <dbReference type="EMBL" id="CZT98453.1"/>
    </source>
</evidence>
<evidence type="ECO:0000312" key="7">
    <source>
        <dbReference type="Proteomes" id="UP000001450"/>
    </source>
</evidence>
<feature type="chain" id="PRO_0000459587" description="Putative tRNA-specific 2-thiouridylase">
    <location>
        <begin position="1"/>
        <end position="1084"/>
    </location>
</feature>
<feature type="transmembrane region" description="Helical" evidence="2">
    <location>
        <begin position="1"/>
        <end position="21"/>
    </location>
</feature>
<feature type="transmembrane region" description="Helical" evidence="2">
    <location>
        <begin position="32"/>
        <end position="52"/>
    </location>
</feature>
<feature type="transmembrane region" description="Helical" evidence="2">
    <location>
        <begin position="309"/>
        <end position="329"/>
    </location>
</feature>
<feature type="active site" description="Nucleophile" evidence="1">
    <location>
        <position position="538"/>
    </location>
</feature>
<feature type="active site" description="Cysteine persulfide intermediate" evidence="1">
    <location>
        <position position="715"/>
    </location>
</feature>
<feature type="disulfide bond" description="Alternate" evidence="1">
    <location>
        <begin position="538"/>
        <end position="715"/>
    </location>
</feature>
<protein>
    <recommendedName>
        <fullName evidence="4">Putative tRNA-specific 2-thiouridylase</fullName>
        <shortName evidence="4">PfMnmA</shortName>
        <ecNumber evidence="1">2.8.1.13</ecNumber>
    </recommendedName>
</protein>
<dbReference type="EC" id="2.8.1.13" evidence="1"/>
<dbReference type="EMBL" id="LN999944">
    <property type="protein sequence ID" value="CZT98453.1"/>
    <property type="molecule type" value="Genomic_DNA"/>
</dbReference>
<dbReference type="RefSeq" id="XP_001347476.2">
    <property type="nucleotide sequence ID" value="XM_001347440.2"/>
</dbReference>
<dbReference type="FunCoup" id="Q8IJK4">
    <property type="interactions" value="1"/>
</dbReference>
<dbReference type="STRING" id="36329.Q8IJK4"/>
<dbReference type="PaxDb" id="5833-PF10_0191"/>
<dbReference type="EnsemblProtists" id="CZT98453">
    <property type="protein sequence ID" value="CZT98453"/>
    <property type="gene ID" value="PF3D7_1019800"/>
</dbReference>
<dbReference type="GeneID" id="810349"/>
<dbReference type="KEGG" id="pfa:PF3D7_1019800"/>
<dbReference type="VEuPathDB" id="PlasmoDB:PF3D7_1019800"/>
<dbReference type="HOGENOM" id="CLU_320440_0_0_1"/>
<dbReference type="InParanoid" id="Q8IJK4"/>
<dbReference type="OMA" id="HYAMIST"/>
<dbReference type="OrthoDB" id="3685at2759"/>
<dbReference type="PhylomeDB" id="Q8IJK4"/>
<dbReference type="Proteomes" id="UP000001450">
    <property type="component" value="Chromosome 10"/>
</dbReference>
<dbReference type="GO" id="GO:0020011">
    <property type="term" value="C:apicoplast"/>
    <property type="evidence" value="ECO:0007669"/>
    <property type="project" value="UniProtKB-SubCell"/>
</dbReference>
<dbReference type="GO" id="GO:0016020">
    <property type="term" value="C:membrane"/>
    <property type="evidence" value="ECO:0007669"/>
    <property type="project" value="UniProtKB-SubCell"/>
</dbReference>
<dbReference type="GO" id="GO:0005524">
    <property type="term" value="F:ATP binding"/>
    <property type="evidence" value="ECO:0007669"/>
    <property type="project" value="UniProtKB-KW"/>
</dbReference>
<dbReference type="GO" id="GO:0004808">
    <property type="term" value="F:tRNA (5-methylaminomethyl-2-thiouridylate)(34)-methyltransferase activity"/>
    <property type="evidence" value="ECO:0007669"/>
    <property type="project" value="UniProtKB-EC"/>
</dbReference>
<dbReference type="GO" id="GO:0000049">
    <property type="term" value="F:tRNA binding"/>
    <property type="evidence" value="ECO:0007669"/>
    <property type="project" value="UniProtKB-KW"/>
</dbReference>
<dbReference type="GO" id="GO:0103016">
    <property type="term" value="F:tRNA-uridine 2-sulfurtransferase activity"/>
    <property type="evidence" value="ECO:0007669"/>
    <property type="project" value="RHEA"/>
</dbReference>
<dbReference type="GO" id="GO:0008033">
    <property type="term" value="P:tRNA processing"/>
    <property type="evidence" value="ECO:0007669"/>
    <property type="project" value="UniProtKB-KW"/>
</dbReference>
<dbReference type="Gene3D" id="3.40.50.620">
    <property type="entry name" value="HUPs"/>
    <property type="match status" value="1"/>
</dbReference>
<dbReference type="InterPro" id="IPR014729">
    <property type="entry name" value="Rossmann-like_a/b/a_fold"/>
</dbReference>
<dbReference type="InterPro" id="IPR051305">
    <property type="entry name" value="tRNA_2-thiouridylase_MnmA"/>
</dbReference>
<dbReference type="PANTHER" id="PTHR43052">
    <property type="match status" value="1"/>
</dbReference>
<dbReference type="PANTHER" id="PTHR43052:SF1">
    <property type="entry name" value="TRNA-5-TAURINOMETHYLURIDINE 2-SULFURTRANSFERASE"/>
    <property type="match status" value="1"/>
</dbReference>
<dbReference type="Pfam" id="PF03054">
    <property type="entry name" value="tRNA_Me_trans"/>
    <property type="match status" value="2"/>
</dbReference>
<dbReference type="SUPFAM" id="SSF52402">
    <property type="entry name" value="Adenine nucleotide alpha hydrolases-like"/>
    <property type="match status" value="1"/>
</dbReference>
<sequence>MLIFFFFFFFFKYIYNIFILTCFYITLSSYYFIISFIFSTLMFFYFCTFYVISLFFLYISSFCKSIKVTQLYDKKIKIKSFINNYLVSCRKKKYIYNNVDDKSNIGTFNLYHNIRDNNNNNNNNDNNNNLKKRDDVLFPLCNKNIINDVQKIYDEVNNIKDKEQKINYLMEQCSSLCKENYFPPILNLNKAYRNKRIDEFNKGNKNFYINEVGKNIWYKYVNRCDEILFMAIDIQIDEDEQRNNSIKDVHDVHDDNIKTCTLIKDDKHFEKYKDIHNDNILKNILPLDKKIDSIKNMLNHKYMKKKKCIITIDAYSNNLILYCFLYLILKHINKMYLYSFMNIQIKEITAKLKELFDLHFNVHHIIDYIHEYIYNFLMSYHIKRKKNKSKNMKEKDIKNVFANNIIISDEENKHISKESSDMYKKKTTITTTTTTKKKKNTMKLFTYPRIAHMLSGGVDSLMALHLLERKKFYVDNYFFNFTNADCSKNDIKYVKDICKNNKRNLFIININDEYFDEVLVPMLFFYADGKVPNPDIMCNQKIKYNFFLKVIKSIYKQKWNYRTKSKLCNYDFISTGHYAMIRTNDKNNPNNIFNNNLFIKKKKKKIKNIKNKKNIKNKNNIKNKNNNNNIYTYNIYNLHNDNIKTNYKKNNKYFYKLLVSNDKKKDQTFFLSSFNHIQLSKFIFPLSLYTKKDVKKYMNENNINNYNHKETKGLCLFGNIDMQTLLHKYFVNTEKDDIKNKQNEDNIFKENNILNLNNNFNQNEKKKKKEKKLLVDITTTSSHLKKFRETFIPKMNLHYKNYLINLDDQTILDINSDIHLYAIGQHKNVTNYLHNLYNKKMININGYKKKHVKNVISSFQWIVVYKKIKRDMSTNLIHNFIYLTKNYDQDLFTHIRTKCKLHNIKWIEGKLPACIKKQFKKYNKINKKKKKINNNNNKYKTNETFHVYNNIQESGKKKKKKKVKNIPHDEKTIFVKIRNSEQIKKAKIKFSLSNNTAYLKVKQKDTGFSPGQIITLYFPFIIKKNNKVTYITNLNKYNNLINTNKNTIYYHCLGSATISNQFLDYNLYQHIKNIHQINDLNMSK</sequence>
<accession>Q8IJK4</accession>
<gene>
    <name evidence="4" type="primary">MNMA</name>
    <name evidence="6" type="ORF">PF3D7_1019800</name>
</gene>
<reference evidence="7" key="1">
    <citation type="journal article" date="2002" name="Nature">
        <title>Genome sequence of the human malaria parasite Plasmodium falciparum.</title>
        <authorList>
            <person name="Gardner M.J."/>
            <person name="Hall N."/>
            <person name="Fung E."/>
            <person name="White O."/>
            <person name="Berriman M."/>
            <person name="Hyman R.W."/>
            <person name="Carlton J.M."/>
            <person name="Pain A."/>
            <person name="Nelson K.E."/>
            <person name="Bowman S."/>
            <person name="Paulsen I.T."/>
            <person name="James K.D."/>
            <person name="Eisen J.A."/>
            <person name="Rutherford K.M."/>
            <person name="Salzberg S.L."/>
            <person name="Craig A."/>
            <person name="Kyes S."/>
            <person name="Chan M.-S."/>
            <person name="Nene V."/>
            <person name="Shallom S.J."/>
            <person name="Suh B."/>
            <person name="Peterson J."/>
            <person name="Angiuoli S."/>
            <person name="Pertea M."/>
            <person name="Allen J."/>
            <person name="Selengut J."/>
            <person name="Haft D."/>
            <person name="Mather M.W."/>
            <person name="Vaidya A.B."/>
            <person name="Martin D.M.A."/>
            <person name="Fairlamb A.H."/>
            <person name="Fraunholz M.J."/>
            <person name="Roos D.S."/>
            <person name="Ralph S.A."/>
            <person name="McFadden G.I."/>
            <person name="Cummings L.M."/>
            <person name="Subramanian G.M."/>
            <person name="Mungall C."/>
            <person name="Venter J.C."/>
            <person name="Carucci D.J."/>
            <person name="Hoffman S.L."/>
            <person name="Newbold C."/>
            <person name="Davis R.W."/>
            <person name="Fraser C.M."/>
            <person name="Barrell B.G."/>
        </authorList>
    </citation>
    <scope>NUCLEOTIDE SEQUENCE [LARGE SCALE GENOMIC DNA]</scope>
    <source>
        <strain evidence="7">3D7</strain>
    </source>
</reference>
<reference evidence="5" key="2">
    <citation type="journal article" date="2023" name="Elife">
        <title>The Plasmodium falciparum apicoplast cysteine desulfurase provides sulfur for both iron-sulfur cluster assembly and tRNA modification.</title>
        <authorList>
            <person name="Swift R.P."/>
            <person name="Elahi R."/>
            <person name="Rajaram K."/>
            <person name="Liu H.B."/>
            <person name="Prigge S.T."/>
        </authorList>
    </citation>
    <scope>FUNCTION</scope>
    <scope>SUBCELLULAR LOCATION</scope>
    <scope>DISRUPTION PHENOTYPE</scope>
    <source>
        <strain evidence="4">NF54</strain>
    </source>
</reference>
<keyword id="KW-0933">Apicoplast</keyword>
<keyword id="KW-0067">ATP-binding</keyword>
<keyword id="KW-1015">Disulfide bond</keyword>
<keyword id="KW-0472">Membrane</keyword>
<keyword id="KW-0547">Nucleotide-binding</keyword>
<keyword id="KW-0934">Plastid</keyword>
<keyword id="KW-1185">Reference proteome</keyword>
<keyword id="KW-0694">RNA-binding</keyword>
<keyword id="KW-0808">Transferase</keyword>
<keyword id="KW-0812">Transmembrane</keyword>
<keyword id="KW-1133">Transmembrane helix</keyword>
<keyword id="KW-0819">tRNA processing</keyword>
<keyword id="KW-0820">tRNA-binding</keyword>
<comment type="function">
    <text evidence="1 3">Catalyzes the 2-thiolation of uridine at the wobble position (U34) of tRNA, leading to the formation of s(2)U34 (By similarity). Required for apicoplast maintenance (PubMed:37166116).</text>
</comment>
<comment type="catalytic activity">
    <reaction evidence="1">
        <text>S-sulfanyl-L-cysteinyl-[protein] + uridine(34) in tRNA + AH2 + ATP = 2-thiouridine(34) in tRNA + L-cysteinyl-[protein] + A + AMP + diphosphate + H(+)</text>
        <dbReference type="Rhea" id="RHEA:47032"/>
        <dbReference type="Rhea" id="RHEA-COMP:10131"/>
        <dbReference type="Rhea" id="RHEA-COMP:11726"/>
        <dbReference type="Rhea" id="RHEA-COMP:11727"/>
        <dbReference type="Rhea" id="RHEA-COMP:11728"/>
        <dbReference type="ChEBI" id="CHEBI:13193"/>
        <dbReference type="ChEBI" id="CHEBI:15378"/>
        <dbReference type="ChEBI" id="CHEBI:17499"/>
        <dbReference type="ChEBI" id="CHEBI:29950"/>
        <dbReference type="ChEBI" id="CHEBI:30616"/>
        <dbReference type="ChEBI" id="CHEBI:33019"/>
        <dbReference type="ChEBI" id="CHEBI:61963"/>
        <dbReference type="ChEBI" id="CHEBI:65315"/>
        <dbReference type="ChEBI" id="CHEBI:87170"/>
        <dbReference type="ChEBI" id="CHEBI:456215"/>
        <dbReference type="EC" id="2.8.1.13"/>
    </reaction>
</comment>
<comment type="subcellular location">
    <subcellularLocation>
        <location evidence="3">Plastid</location>
        <location evidence="3">Apicoplast</location>
    </subcellularLocation>
    <subcellularLocation>
        <location evidence="2">Membrane</location>
        <topology evidence="2">Multi-pass membrane protein</topology>
    </subcellularLocation>
</comment>
<comment type="disruption phenotype">
    <text evidence="3">Parasites require exogenously provided mevalonate for survival (PubMed:37166116). Apicoplast structure is disrupted (PubMed:37166116).</text>
</comment>
<comment type="similarity">
    <text evidence="5">Belongs to the MnmA/TRMU family.</text>
</comment>
<proteinExistence type="inferred from homology"/>
<name>MNMA_PLAF7</name>